<protein>
    <recommendedName>
        <fullName evidence="1">Small ribosomal subunit protein uS15</fullName>
    </recommendedName>
    <alternativeName>
        <fullName evidence="2">30S ribosomal protein S15</fullName>
    </alternativeName>
</protein>
<comment type="function">
    <text evidence="1">One of the primary rRNA binding proteins, it binds directly to 16S rRNA where it helps nucleate assembly of the platform of the 30S subunit by binding and bridging several RNA helices of the 16S rRNA.</text>
</comment>
<comment type="function">
    <text evidence="1">Forms an intersubunit bridge (bridge B4) with the 23S rRNA of the 50S subunit in the ribosome.</text>
</comment>
<comment type="subunit">
    <text evidence="1">Part of the 30S ribosomal subunit. Forms a bridge to the 50S subunit in the 70S ribosome, contacting the 23S rRNA.</text>
</comment>
<comment type="similarity">
    <text evidence="1">Belongs to the universal ribosomal protein uS15 family.</text>
</comment>
<reference key="1">
    <citation type="submission" date="2007-12" db="EMBL/GenBank/DDBJ databases">
        <title>Complete sequence of Methylobacterium extorquens PA1.</title>
        <authorList>
            <consortium name="US DOE Joint Genome Institute"/>
            <person name="Copeland A."/>
            <person name="Lucas S."/>
            <person name="Lapidus A."/>
            <person name="Barry K."/>
            <person name="Glavina del Rio T."/>
            <person name="Dalin E."/>
            <person name="Tice H."/>
            <person name="Pitluck S."/>
            <person name="Saunders E."/>
            <person name="Brettin T."/>
            <person name="Bruce D."/>
            <person name="Detter J.C."/>
            <person name="Han C."/>
            <person name="Schmutz J."/>
            <person name="Larimer F."/>
            <person name="Land M."/>
            <person name="Hauser L."/>
            <person name="Kyrpides N."/>
            <person name="Kim E."/>
            <person name="Marx C."/>
            <person name="Richardson P."/>
        </authorList>
    </citation>
    <scope>NUCLEOTIDE SEQUENCE [LARGE SCALE GENOMIC DNA]</scope>
    <source>
        <strain>PA1</strain>
    </source>
</reference>
<dbReference type="EMBL" id="CP000908">
    <property type="protein sequence ID" value="ABY32398.1"/>
    <property type="molecule type" value="Genomic_DNA"/>
</dbReference>
<dbReference type="RefSeq" id="WP_003597553.1">
    <property type="nucleotide sequence ID" value="NC_010172.1"/>
</dbReference>
<dbReference type="SMR" id="A9W8P9"/>
<dbReference type="GeneID" id="72991745"/>
<dbReference type="KEGG" id="mex:Mext_4028"/>
<dbReference type="eggNOG" id="COG0184">
    <property type="taxonomic scope" value="Bacteria"/>
</dbReference>
<dbReference type="HOGENOM" id="CLU_148518_0_0_5"/>
<dbReference type="BioCyc" id="MEXT419610:MEXT_RS20230-MONOMER"/>
<dbReference type="GO" id="GO:0022627">
    <property type="term" value="C:cytosolic small ribosomal subunit"/>
    <property type="evidence" value="ECO:0007669"/>
    <property type="project" value="TreeGrafter"/>
</dbReference>
<dbReference type="GO" id="GO:0019843">
    <property type="term" value="F:rRNA binding"/>
    <property type="evidence" value="ECO:0007669"/>
    <property type="project" value="UniProtKB-UniRule"/>
</dbReference>
<dbReference type="GO" id="GO:0003735">
    <property type="term" value="F:structural constituent of ribosome"/>
    <property type="evidence" value="ECO:0007669"/>
    <property type="project" value="InterPro"/>
</dbReference>
<dbReference type="GO" id="GO:0006412">
    <property type="term" value="P:translation"/>
    <property type="evidence" value="ECO:0007669"/>
    <property type="project" value="UniProtKB-UniRule"/>
</dbReference>
<dbReference type="CDD" id="cd00353">
    <property type="entry name" value="Ribosomal_S15p_S13e"/>
    <property type="match status" value="1"/>
</dbReference>
<dbReference type="FunFam" id="1.10.287.10:FF:000002">
    <property type="entry name" value="30S ribosomal protein S15"/>
    <property type="match status" value="1"/>
</dbReference>
<dbReference type="Gene3D" id="6.10.250.3130">
    <property type="match status" value="1"/>
</dbReference>
<dbReference type="Gene3D" id="1.10.287.10">
    <property type="entry name" value="S15/NS1, RNA-binding"/>
    <property type="match status" value="1"/>
</dbReference>
<dbReference type="HAMAP" id="MF_01343_B">
    <property type="entry name" value="Ribosomal_uS15_B"/>
    <property type="match status" value="1"/>
</dbReference>
<dbReference type="InterPro" id="IPR000589">
    <property type="entry name" value="Ribosomal_uS15"/>
</dbReference>
<dbReference type="InterPro" id="IPR005290">
    <property type="entry name" value="Ribosomal_uS15_bac-type"/>
</dbReference>
<dbReference type="InterPro" id="IPR009068">
    <property type="entry name" value="uS15_NS1_RNA-bd_sf"/>
</dbReference>
<dbReference type="NCBIfam" id="TIGR00952">
    <property type="entry name" value="S15_bact"/>
    <property type="match status" value="1"/>
</dbReference>
<dbReference type="PANTHER" id="PTHR23321">
    <property type="entry name" value="RIBOSOMAL PROTEIN S15, BACTERIAL AND ORGANELLAR"/>
    <property type="match status" value="1"/>
</dbReference>
<dbReference type="PANTHER" id="PTHR23321:SF26">
    <property type="entry name" value="SMALL RIBOSOMAL SUBUNIT PROTEIN US15M"/>
    <property type="match status" value="1"/>
</dbReference>
<dbReference type="Pfam" id="PF00312">
    <property type="entry name" value="Ribosomal_S15"/>
    <property type="match status" value="1"/>
</dbReference>
<dbReference type="SMART" id="SM01387">
    <property type="entry name" value="Ribosomal_S15"/>
    <property type="match status" value="1"/>
</dbReference>
<dbReference type="SUPFAM" id="SSF47060">
    <property type="entry name" value="S15/NS1 RNA-binding domain"/>
    <property type="match status" value="1"/>
</dbReference>
<dbReference type="PROSITE" id="PS00362">
    <property type="entry name" value="RIBOSOMAL_S15"/>
    <property type="match status" value="1"/>
</dbReference>
<keyword id="KW-0687">Ribonucleoprotein</keyword>
<keyword id="KW-0689">Ribosomal protein</keyword>
<keyword id="KW-0694">RNA-binding</keyword>
<keyword id="KW-0699">rRNA-binding</keyword>
<feature type="chain" id="PRO_1000143138" description="Small ribosomal subunit protein uS15">
    <location>
        <begin position="1"/>
        <end position="89"/>
    </location>
</feature>
<proteinExistence type="inferred from homology"/>
<name>RS15_METEP</name>
<gene>
    <name evidence="1" type="primary">rpsO</name>
    <name type="ordered locus">Mext_4028</name>
</gene>
<sequence length="89" mass="10347">MSITAERKTALIKDYAKGNKDTGSPEVQIAILTERITNLTAHFKTHGKDNHSRRGLLKLVSQRRSLLDYLKRKEEARYRTLIERLGIRR</sequence>
<accession>A9W8P9</accession>
<evidence type="ECO:0000255" key="1">
    <source>
        <dbReference type="HAMAP-Rule" id="MF_01343"/>
    </source>
</evidence>
<evidence type="ECO:0000305" key="2"/>
<organism>
    <name type="scientific">Methylorubrum extorquens (strain PA1)</name>
    <name type="common">Methylobacterium extorquens</name>
    <dbReference type="NCBI Taxonomy" id="419610"/>
    <lineage>
        <taxon>Bacteria</taxon>
        <taxon>Pseudomonadati</taxon>
        <taxon>Pseudomonadota</taxon>
        <taxon>Alphaproteobacteria</taxon>
        <taxon>Hyphomicrobiales</taxon>
        <taxon>Methylobacteriaceae</taxon>
        <taxon>Methylorubrum</taxon>
    </lineage>
</organism>